<protein>
    <recommendedName>
        <fullName evidence="3">Wasabi receptor toxin</fullName>
        <shortName evidence="3">WaTx</shortName>
    </recommendedName>
</protein>
<sequence>MKYFTLALTLLFLLLINPCKDMNFAWAESSEKVERASPQQAKYCYEQCNVNKVPFDQCYQMCSPLERS</sequence>
<dbReference type="PDB" id="6OFA">
    <property type="method" value="NMR"/>
    <property type="chains" value="A=36-68"/>
</dbReference>
<dbReference type="PDBsum" id="6OFA"/>
<dbReference type="BMRB" id="C0HLG4"/>
<dbReference type="SMR" id="C0HLG4"/>
<dbReference type="GO" id="GO:0005576">
    <property type="term" value="C:extracellular region"/>
    <property type="evidence" value="ECO:0007669"/>
    <property type="project" value="UniProtKB-SubCell"/>
</dbReference>
<dbReference type="GO" id="GO:0030430">
    <property type="term" value="C:host cell cytoplasm"/>
    <property type="evidence" value="ECO:0007669"/>
    <property type="project" value="UniProtKB-SubCell"/>
</dbReference>
<dbReference type="GO" id="GO:0099106">
    <property type="term" value="F:ion channel regulator activity"/>
    <property type="evidence" value="ECO:0007669"/>
    <property type="project" value="UniProtKB-KW"/>
</dbReference>
<dbReference type="GO" id="GO:0090729">
    <property type="term" value="F:toxin activity"/>
    <property type="evidence" value="ECO:0007669"/>
    <property type="project" value="UniProtKB-KW"/>
</dbReference>
<keyword id="KW-0002">3D-structure</keyword>
<keyword id="KW-0903">Direct protein sequencing</keyword>
<keyword id="KW-1015">Disulfide bond</keyword>
<keyword id="KW-1035">Host cytoplasm</keyword>
<keyword id="KW-0872">Ion channel impairing toxin</keyword>
<keyword id="KW-0582">Pharmaceutical</keyword>
<keyword id="KW-0964">Secreted</keyword>
<keyword id="KW-0732">Signal</keyword>
<keyword id="KW-0800">Toxin</keyword>
<organism>
    <name type="scientific">Urodacus manicatus</name>
    <name type="common">Black rock scorpion</name>
    <dbReference type="NCBI Taxonomy" id="1330407"/>
    <lineage>
        <taxon>Eukaryota</taxon>
        <taxon>Metazoa</taxon>
        <taxon>Ecdysozoa</taxon>
        <taxon>Arthropoda</taxon>
        <taxon>Chelicerata</taxon>
        <taxon>Arachnida</taxon>
        <taxon>Scorpiones</taxon>
        <taxon>Iurida</taxon>
        <taxon>Scorpionoidea</taxon>
        <taxon>Scorpionidae</taxon>
        <taxon>Urodacinae</taxon>
        <taxon>Urodacus</taxon>
    </lineage>
</organism>
<feature type="signal peptide" evidence="1">
    <location>
        <begin position="1"/>
        <end position="21"/>
    </location>
</feature>
<feature type="propeptide" id="PRO_0000448352" evidence="2">
    <location>
        <begin position="22"/>
        <end position="35"/>
    </location>
</feature>
<feature type="chain" id="PRO_0000448353" description="Wasabi receptor toxin" evidence="2">
    <location>
        <begin position="36"/>
        <end position="68"/>
    </location>
</feature>
<feature type="disulfide bond" evidence="2 6">
    <location>
        <begin position="44"/>
        <end position="62"/>
    </location>
</feature>
<feature type="disulfide bond" evidence="2 6">
    <location>
        <begin position="48"/>
        <end position="58"/>
    </location>
</feature>
<feature type="mutagenesis site" description="No change in cell-penetrating properties." evidence="2">
    <original>Q</original>
    <variation>A</variation>
    <location>
        <position position="39"/>
    </location>
</feature>
<feature type="mutagenesis site" description="No change in cell-penetrating properties." evidence="2">
    <original>Q</original>
    <variation>A</variation>
    <location>
        <position position="40"/>
    </location>
</feature>
<feature type="mutagenesis site" description="Decrease in ability penetrate membranes." evidence="2">
    <original>K</original>
    <variation>A</variation>
    <location>
        <position position="42"/>
    </location>
</feature>
<feature type="mutagenesis site" description="No change in cell-penetrating properties." evidence="2">
    <original>R</original>
    <variation>A</variation>
    <location>
        <position position="67"/>
    </location>
</feature>
<feature type="sequence conflict" description="In Ref. 1." evidence="4" ref="1">
    <original>PQ</original>
    <variation>QD</variation>
    <location>
        <begin position="38"/>
        <end position="39"/>
    </location>
</feature>
<feature type="helix" evidence="7">
    <location>
        <begin position="38"/>
        <end position="51"/>
    </location>
</feature>
<feature type="helix" evidence="7">
    <location>
        <begin position="55"/>
        <end position="66"/>
    </location>
</feature>
<name>KKX1U_UROMN</name>
<accession>C0HLG4</accession>
<evidence type="ECO:0000255" key="1"/>
<evidence type="ECO:0000269" key="2">
    <source>
    </source>
</evidence>
<evidence type="ECO:0000303" key="3">
    <source>
    </source>
</evidence>
<evidence type="ECO:0000305" key="4"/>
<evidence type="ECO:0000305" key="5">
    <source>
    </source>
</evidence>
<evidence type="ECO:0007744" key="6">
    <source>
        <dbReference type="PDB" id="6OFA"/>
    </source>
</evidence>
<evidence type="ECO:0007829" key="7">
    <source>
        <dbReference type="PDB" id="6OFA"/>
    </source>
</evidence>
<comment type="function">
    <text evidence="2">Cell-penetrating peptide (CPP) with defensive purpose that induces pain by specifically activating mammalian sensory neuron TRPA1 channels. It non-covalently binds to the same region than other TRPA1 agonists (irritants), but acts via a distinct biochemical mechanism. Its binding stabilizes the TRPA1 open state and diminishes calcium-permeability. Consequently, it produces pain and pain hypersensitivity, but fails to trigger efferent release of neuropeptides (CGRP) and neurogenic inflammation typically produced by noxious electrophiles. Is not active on voltage-gated potassium channels and other TRP channels.</text>
</comment>
<comment type="subunit">
    <text evidence="2">Monomer.</text>
</comment>
<comment type="subcellular location">
    <subcellularLocation>
        <location evidence="2">Secreted</location>
    </subcellularLocation>
    <subcellularLocation>
        <location evidence="2">Host cytoplasm</location>
    </subcellularLocation>
    <text evidence="2">Penetrates into cell via passive diffusion and binds to the cytoplasmic side of TRPA1 (PubMed:31447178).</text>
</comment>
<comment type="tissue specificity">
    <text evidence="5">Expressed by the venom gland.</text>
</comment>
<comment type="domain">
    <text evidence="2">Has the structural arrangement of two alpha-helices stabilized by disulfide bonds (CSalpha/alpha 2(S-S)).</text>
</comment>
<comment type="mass spectrometry">
    <text>Monoisotopic mass.</text>
</comment>
<comment type="pharmaceutical">
    <text evidence="5">Could be used, as a first step, as a pharmacological probe for dissecting TRPA1 function and its contribution to acute and persistent pain.</text>
</comment>
<comment type="miscellaneous">
    <text evidence="2">Negative results: has no effect on Kv1.2/KCNA2, Kv2.1/KCNB1, Kv3.1/KCNC1, Kv4.3/KCND3, TRPM8, and TRPV1.</text>
</comment>
<comment type="similarity">
    <text evidence="4">Belongs to the short scorpion toxin superfamily. Potassium channel inhibitor kappa-KTx family. Kappa-KTx 1 subfamily.</text>
</comment>
<comment type="online information" name="National Center for Biotechnology Information (NCBI)">
    <link uri="https://trace.ncbi.nlm.nih.gov/Traces/sra/sra.cgi?run=SRR870663.19916.2"/>
</comment>
<comment type="online information" name="Protein Spotlight">
    <link uri="https://www.proteinspotlight.org/back_issues/219/"/>
    <text>Sting - Issue 219 of November 2019</text>
</comment>
<proteinExistence type="evidence at protein level"/>
<reference key="1">
    <citation type="journal article" date="2013" name="Toxins">
        <title>Evolution stings: the origin and diversification of scorpion toxin peptide scaffolds.</title>
        <authorList>
            <person name="Sunagar K."/>
            <person name="Undheim E.A."/>
            <person name="Chan A.H."/>
            <person name="Koludarov I."/>
            <person name="Munoz-Gomez S.A."/>
            <person name="Antunes A."/>
            <person name="Fry B.G."/>
        </authorList>
    </citation>
    <scope>NUCLEOTIDE SEQUENCE [MRNA]</scope>
    <source>
        <tissue>Venom gland</tissue>
    </source>
</reference>
<reference key="2">
    <citation type="journal article" date="2019" name="Cell">
        <title>A cell-penetrating scorpion toxin enables mode-specific modulation of TRPA1 and pain.</title>
        <authorList>
            <person name="Lin King J.V."/>
            <person name="Emrick J.J."/>
            <person name="Kelly M.J.S."/>
            <person name="Herzig V."/>
            <person name="King G.F."/>
            <person name="Medzihradszky K.F."/>
            <person name="Julius D."/>
        </authorList>
    </citation>
    <scope>PROTEIN SEQUENCE OF 36-68</scope>
    <scope>STRUCTURE BY NMR OF 36-68</scope>
    <scope>DISULFIDE BOND</scope>
    <scope>SUBCELLULAR LOCATION</scope>
    <scope>MASS SPECTROMETRY</scope>
    <scope>SUBUNIT</scope>
    <scope>SYNTHESIS OF 36-68</scope>
    <scope>MUTAGENESIS OF GLN-39; GLN-40; LYS-42 AND ARG-67</scope>
    <scope>FUNCTION</scope>
    <scope>BIOASSAY</scope>
    <source>
        <tissue>Venom</tissue>
    </source>
</reference>